<comment type="function">
    <text evidence="1">Accessory subunit of the mitochondrial membrane respiratory chain NADH dehydrogenase (Complex I), that is believed not to be involved in catalysis. Complex I functions in the transfer of electrons from NADH to the respiratory chain. The immediate electron acceptor for the enzyme is believed to be ubiquinone.</text>
</comment>
<comment type="subunit">
    <text evidence="1">Complex I is composed of 45 different subunits.</text>
</comment>
<comment type="subcellular location">
    <subcellularLocation>
        <location evidence="1">Mitochondrion inner membrane</location>
        <topology evidence="3">Single-pass membrane protein</topology>
        <orientation evidence="1">Matrix side</orientation>
    </subcellularLocation>
</comment>
<comment type="similarity">
    <text evidence="4">Belongs to the complex I NDUFB4 subunit family.</text>
</comment>
<organism>
    <name type="scientific">Pan troglodytes</name>
    <name type="common">Chimpanzee</name>
    <dbReference type="NCBI Taxonomy" id="9598"/>
    <lineage>
        <taxon>Eukaryota</taxon>
        <taxon>Metazoa</taxon>
        <taxon>Chordata</taxon>
        <taxon>Craniata</taxon>
        <taxon>Vertebrata</taxon>
        <taxon>Euteleostomi</taxon>
        <taxon>Mammalia</taxon>
        <taxon>Eutheria</taxon>
        <taxon>Euarchontoglires</taxon>
        <taxon>Primates</taxon>
        <taxon>Haplorrhini</taxon>
        <taxon>Catarrhini</taxon>
        <taxon>Hominidae</taxon>
        <taxon>Pan</taxon>
    </lineage>
</organism>
<keyword id="KW-0007">Acetylation</keyword>
<keyword id="KW-0249">Electron transport</keyword>
<keyword id="KW-0472">Membrane</keyword>
<keyword id="KW-0496">Mitochondrion</keyword>
<keyword id="KW-0999">Mitochondrion inner membrane</keyword>
<keyword id="KW-0597">Phosphoprotein</keyword>
<keyword id="KW-1185">Reference proteome</keyword>
<keyword id="KW-0679">Respiratory chain</keyword>
<keyword id="KW-0812">Transmembrane</keyword>
<keyword id="KW-1133">Transmembrane helix</keyword>
<keyword id="KW-0813">Transport</keyword>
<proteinExistence type="evidence at transcript level"/>
<name>NDUB4_PANTR</name>
<sequence length="129" mass="15209">MSFPKYKPSSLRTLPETLDPAEYNISPETRRAQAERLAIRAQLKREYLLQYNDPNRRGLIENPALLRWAYARTINVYPNFRPTPKNSLMGALCGFGPLIFIYYIIKTERDRKEKLIQEGKLDRTFHLSY</sequence>
<gene>
    <name type="primary">NDUFB4</name>
</gene>
<reference key="1">
    <citation type="journal article" date="2006" name="Gene">
        <title>Adaptive selection of mitochondrial complex I subunits during primate radiation.</title>
        <authorList>
            <person name="Mishmar D."/>
            <person name="Ruiz-Pesini E."/>
            <person name="Mondragon-Palomino M."/>
            <person name="Procaccio V."/>
            <person name="Gaut B."/>
            <person name="Wallace D.C."/>
        </authorList>
    </citation>
    <scope>NUCLEOTIDE SEQUENCE [MRNA]</scope>
</reference>
<dbReference type="EMBL" id="DQ885699">
    <property type="protein sequence ID" value="ABH12208.1"/>
    <property type="molecule type" value="mRNA"/>
</dbReference>
<dbReference type="RefSeq" id="NP_001065260.1">
    <property type="nucleotide sequence ID" value="NM_001071792.1"/>
</dbReference>
<dbReference type="SMR" id="Q0MQD5"/>
<dbReference type="FunCoup" id="Q0MQD5">
    <property type="interactions" value="971"/>
</dbReference>
<dbReference type="STRING" id="9598.ENSPTRP00000026324"/>
<dbReference type="PaxDb" id="9598-ENSPTRP00000026324"/>
<dbReference type="Ensembl" id="ENSPTRT00000028523.3">
    <property type="protein sequence ID" value="ENSPTRP00000026324.2"/>
    <property type="gene ID" value="ENSPTRG00000015270.5"/>
</dbReference>
<dbReference type="GeneID" id="460612"/>
<dbReference type="KEGG" id="ptr:460612"/>
<dbReference type="CTD" id="4710"/>
<dbReference type="VGNC" id="VGNC:7988">
    <property type="gene designation" value="NDUFB4"/>
</dbReference>
<dbReference type="eggNOG" id="ENOG502S2HF">
    <property type="taxonomic scope" value="Eukaryota"/>
</dbReference>
<dbReference type="GeneTree" id="ENSGT00390000007133"/>
<dbReference type="HOGENOM" id="CLU_123402_0_0_1"/>
<dbReference type="InParanoid" id="Q0MQD5"/>
<dbReference type="OMA" id="REYLLHY"/>
<dbReference type="OrthoDB" id="4085at9604"/>
<dbReference type="TreeFam" id="TF328761"/>
<dbReference type="Proteomes" id="UP000002277">
    <property type="component" value="Chromosome 3"/>
</dbReference>
<dbReference type="Bgee" id="ENSPTRG00000015270">
    <property type="expression patterns" value="Expressed in heart and 21 other cell types or tissues"/>
</dbReference>
<dbReference type="GO" id="GO:0005743">
    <property type="term" value="C:mitochondrial inner membrane"/>
    <property type="evidence" value="ECO:0007669"/>
    <property type="project" value="UniProtKB-SubCell"/>
</dbReference>
<dbReference type="GO" id="GO:0005654">
    <property type="term" value="C:nucleoplasm"/>
    <property type="evidence" value="ECO:0007669"/>
    <property type="project" value="Ensembl"/>
</dbReference>
<dbReference type="GO" id="GO:0045271">
    <property type="term" value="C:respiratory chain complex I"/>
    <property type="evidence" value="ECO:0000250"/>
    <property type="project" value="UniProtKB"/>
</dbReference>
<dbReference type="InterPro" id="IPR009866">
    <property type="entry name" value="NADH_UbQ_OxRdtase_NDUFB4_su"/>
</dbReference>
<dbReference type="PANTHER" id="PTHR15469:SF1">
    <property type="entry name" value="NADH DEHYDROGENASE [UBIQUINONE] 1 BETA SUBCOMPLEX SUBUNIT 4"/>
    <property type="match status" value="1"/>
</dbReference>
<dbReference type="PANTHER" id="PTHR15469">
    <property type="entry name" value="NADH-UBIQUINONE OXIDOREDUCTASE B15 SUBUNIT"/>
    <property type="match status" value="1"/>
</dbReference>
<dbReference type="Pfam" id="PF07225">
    <property type="entry name" value="NDUF_B4"/>
    <property type="match status" value="1"/>
</dbReference>
<feature type="initiator methionine" description="Removed" evidence="2">
    <location>
        <position position="1"/>
    </location>
</feature>
<feature type="chain" id="PRO_0000251832" description="NADH dehydrogenase [ubiquinone] 1 beta subcomplex subunit 4">
    <location>
        <begin position="2"/>
        <end position="129"/>
    </location>
</feature>
<feature type="transmembrane region" description="Helical" evidence="3">
    <location>
        <begin position="88"/>
        <end position="105"/>
    </location>
</feature>
<feature type="modified residue" description="N-acetylserine" evidence="2">
    <location>
        <position position="2"/>
    </location>
</feature>
<feature type="modified residue" description="Phosphoserine" evidence="1">
    <location>
        <position position="26"/>
    </location>
</feature>
<accession>Q0MQD5</accession>
<protein>
    <recommendedName>
        <fullName>NADH dehydrogenase [ubiquinone] 1 beta subcomplex subunit 4</fullName>
    </recommendedName>
    <alternativeName>
        <fullName>Complex I-B15</fullName>
        <shortName>CI-B15</shortName>
    </alternativeName>
    <alternativeName>
        <fullName>NADH-ubiquinone oxidoreductase B15 subunit</fullName>
    </alternativeName>
</protein>
<evidence type="ECO:0000250" key="1">
    <source>
        <dbReference type="UniProtKB" id="O95168"/>
    </source>
</evidence>
<evidence type="ECO:0000250" key="2">
    <source>
        <dbReference type="UniProtKB" id="P48305"/>
    </source>
</evidence>
<evidence type="ECO:0000255" key="3"/>
<evidence type="ECO:0000305" key="4"/>